<proteinExistence type="inferred from homology"/>
<reference key="1">
    <citation type="journal article" date="2011" name="Proc. Natl. Acad. Sci. U.S.A.">
        <title>Genomic anatomy of Escherichia coli O157:H7 outbreaks.</title>
        <authorList>
            <person name="Eppinger M."/>
            <person name="Mammel M.K."/>
            <person name="Leclerc J.E."/>
            <person name="Ravel J."/>
            <person name="Cebula T.A."/>
        </authorList>
    </citation>
    <scope>NUCLEOTIDE SEQUENCE [LARGE SCALE GENOMIC DNA]</scope>
    <source>
        <strain>EC4115 / EHEC</strain>
    </source>
</reference>
<organism>
    <name type="scientific">Escherichia coli O157:H7 (strain EC4115 / EHEC)</name>
    <dbReference type="NCBI Taxonomy" id="444450"/>
    <lineage>
        <taxon>Bacteria</taxon>
        <taxon>Pseudomonadati</taxon>
        <taxon>Pseudomonadota</taxon>
        <taxon>Gammaproteobacteria</taxon>
        <taxon>Enterobacterales</taxon>
        <taxon>Enterobacteriaceae</taxon>
        <taxon>Escherichia</taxon>
    </lineage>
</organism>
<comment type="function">
    <text evidence="1">Phosphorylation of dTMP to form dTDP in both de novo and salvage pathways of dTTP synthesis.</text>
</comment>
<comment type="catalytic activity">
    <reaction evidence="1">
        <text>dTMP + ATP = dTDP + ADP</text>
        <dbReference type="Rhea" id="RHEA:13517"/>
        <dbReference type="ChEBI" id="CHEBI:30616"/>
        <dbReference type="ChEBI" id="CHEBI:58369"/>
        <dbReference type="ChEBI" id="CHEBI:63528"/>
        <dbReference type="ChEBI" id="CHEBI:456216"/>
        <dbReference type="EC" id="2.7.4.9"/>
    </reaction>
</comment>
<comment type="similarity">
    <text evidence="1">Belongs to the thymidylate kinase family.</text>
</comment>
<sequence length="213" mass="23816">MRSKYIVIEGLEGAGKTTARNVVVETLEQLGIRDMVFTREPGGTQLAEKLRSLVLDIKSVGDEIITDKAEVLMFYAARVQLVETVIKPALANGTWVIGDRHDLSTQAYQGGGRGIDQHMLATLRDAVLGDFRPDLTLYLDVTPEVGLKRARARGELDRIEQESFDFFNRTRARYLELAAQDKSIHTIDATQPLEAVMDAIRTTVTRWVKELDA</sequence>
<accession>B5YVW6</accession>
<name>KTHY_ECO5E</name>
<evidence type="ECO:0000255" key="1">
    <source>
        <dbReference type="HAMAP-Rule" id="MF_00165"/>
    </source>
</evidence>
<feature type="chain" id="PRO_1000097390" description="Thymidylate kinase">
    <location>
        <begin position="1"/>
        <end position="213"/>
    </location>
</feature>
<feature type="binding site" evidence="1">
    <location>
        <begin position="10"/>
        <end position="17"/>
    </location>
    <ligand>
        <name>ATP</name>
        <dbReference type="ChEBI" id="CHEBI:30616"/>
    </ligand>
</feature>
<gene>
    <name evidence="1" type="primary">tmk</name>
    <name type="ordered locus">ECH74115_1477</name>
</gene>
<protein>
    <recommendedName>
        <fullName evidence="1">Thymidylate kinase</fullName>
        <ecNumber evidence="1">2.7.4.9</ecNumber>
    </recommendedName>
    <alternativeName>
        <fullName evidence="1">dTMP kinase</fullName>
    </alternativeName>
</protein>
<keyword id="KW-0067">ATP-binding</keyword>
<keyword id="KW-0418">Kinase</keyword>
<keyword id="KW-0545">Nucleotide biosynthesis</keyword>
<keyword id="KW-0547">Nucleotide-binding</keyword>
<keyword id="KW-0808">Transferase</keyword>
<dbReference type="EC" id="2.7.4.9" evidence="1"/>
<dbReference type="EMBL" id="CP001164">
    <property type="protein sequence ID" value="ACI39039.1"/>
    <property type="molecule type" value="Genomic_DNA"/>
</dbReference>
<dbReference type="RefSeq" id="WP_001256997.1">
    <property type="nucleotide sequence ID" value="NC_011353.1"/>
</dbReference>
<dbReference type="SMR" id="B5YVW6"/>
<dbReference type="KEGG" id="ecf:ECH74115_1477"/>
<dbReference type="HOGENOM" id="CLU_049131_0_1_6"/>
<dbReference type="GO" id="GO:0005829">
    <property type="term" value="C:cytosol"/>
    <property type="evidence" value="ECO:0007669"/>
    <property type="project" value="TreeGrafter"/>
</dbReference>
<dbReference type="GO" id="GO:0005524">
    <property type="term" value="F:ATP binding"/>
    <property type="evidence" value="ECO:0007669"/>
    <property type="project" value="UniProtKB-UniRule"/>
</dbReference>
<dbReference type="GO" id="GO:0004798">
    <property type="term" value="F:dTMP kinase activity"/>
    <property type="evidence" value="ECO:0007669"/>
    <property type="project" value="UniProtKB-UniRule"/>
</dbReference>
<dbReference type="GO" id="GO:0006233">
    <property type="term" value="P:dTDP biosynthetic process"/>
    <property type="evidence" value="ECO:0007669"/>
    <property type="project" value="InterPro"/>
</dbReference>
<dbReference type="GO" id="GO:0006235">
    <property type="term" value="P:dTTP biosynthetic process"/>
    <property type="evidence" value="ECO:0007669"/>
    <property type="project" value="UniProtKB-UniRule"/>
</dbReference>
<dbReference type="GO" id="GO:0006227">
    <property type="term" value="P:dUDP biosynthetic process"/>
    <property type="evidence" value="ECO:0007669"/>
    <property type="project" value="TreeGrafter"/>
</dbReference>
<dbReference type="CDD" id="cd01672">
    <property type="entry name" value="TMPK"/>
    <property type="match status" value="1"/>
</dbReference>
<dbReference type="FunFam" id="3.40.50.300:FF:000321">
    <property type="entry name" value="Thymidylate kinase"/>
    <property type="match status" value="1"/>
</dbReference>
<dbReference type="Gene3D" id="3.40.50.300">
    <property type="entry name" value="P-loop containing nucleotide triphosphate hydrolases"/>
    <property type="match status" value="1"/>
</dbReference>
<dbReference type="HAMAP" id="MF_00165">
    <property type="entry name" value="Thymidylate_kinase"/>
    <property type="match status" value="1"/>
</dbReference>
<dbReference type="InterPro" id="IPR027417">
    <property type="entry name" value="P-loop_NTPase"/>
</dbReference>
<dbReference type="InterPro" id="IPR039430">
    <property type="entry name" value="Thymidylate_kin-like_dom"/>
</dbReference>
<dbReference type="InterPro" id="IPR018095">
    <property type="entry name" value="Thymidylate_kin_CS"/>
</dbReference>
<dbReference type="InterPro" id="IPR018094">
    <property type="entry name" value="Thymidylate_kinase"/>
</dbReference>
<dbReference type="NCBIfam" id="TIGR00041">
    <property type="entry name" value="DTMP_kinase"/>
    <property type="match status" value="1"/>
</dbReference>
<dbReference type="PANTHER" id="PTHR10344">
    <property type="entry name" value="THYMIDYLATE KINASE"/>
    <property type="match status" value="1"/>
</dbReference>
<dbReference type="PANTHER" id="PTHR10344:SF4">
    <property type="entry name" value="UMP-CMP KINASE 2, MITOCHONDRIAL"/>
    <property type="match status" value="1"/>
</dbReference>
<dbReference type="Pfam" id="PF02223">
    <property type="entry name" value="Thymidylate_kin"/>
    <property type="match status" value="1"/>
</dbReference>
<dbReference type="SUPFAM" id="SSF52540">
    <property type="entry name" value="P-loop containing nucleoside triphosphate hydrolases"/>
    <property type="match status" value="1"/>
</dbReference>
<dbReference type="PROSITE" id="PS01331">
    <property type="entry name" value="THYMIDYLATE_KINASE"/>
    <property type="match status" value="1"/>
</dbReference>